<proteinExistence type="evidence at protein level"/>
<reference key="1">
    <citation type="journal article" date="1990" name="New Biol.">
        <title>Developmental expression and cDNA cloning of globin genes from the brine shrimp, Artemia.</title>
        <authorList>
            <person name="Manning A.M."/>
            <person name="Powell R.J."/>
            <person name="Trotman C.N."/>
            <person name="Tate W.P."/>
        </authorList>
    </citation>
    <scope>NUCLEOTIDE SEQUENCE</scope>
</reference>
<reference key="2">
    <citation type="journal article" date="1988" name="J. Biol. Chem.">
        <title>A structural domain of the covalent polymer globin chains of artemia. Interpretation of amino acid sequence data.</title>
        <authorList>
            <person name="Moens L."/>
            <person name="van Hauwaert M.-L."/>
            <person name="de Smet K."/>
            <person name="Geelen D."/>
            <person name="Verpooten G."/>
            <person name="van Beeumen J."/>
            <person name="Wodak S."/>
            <person name="Alard P."/>
            <person name="Trotman C."/>
        </authorList>
    </citation>
    <scope>PROTEIN SEQUENCE OF 48-147</scope>
</reference>
<organism>
    <name type="scientific">Artemia sp.</name>
    <name type="common">Brine shrimp</name>
    <dbReference type="NCBI Taxonomy" id="6662"/>
    <lineage>
        <taxon>Eukaryota</taxon>
        <taxon>Metazoa</taxon>
        <taxon>Ecdysozoa</taxon>
        <taxon>Arthropoda</taxon>
        <taxon>Crustacea</taxon>
        <taxon>Branchiopoda</taxon>
        <taxon>Anostraca</taxon>
        <taxon>Artemiidae</taxon>
        <taxon>Artemia</taxon>
    </lineage>
</organism>
<sequence>DISHFQNFRVTLLEYLTENGMNGAQKASWNKAFDAFEKYIIMGLSSLERVDPITGLSGLEKNAILDTWGKVRGNLQEVGKATFGKLFAAHPEYQQMFRFFQGVQLAFLVQSPKFAAHTQRVVSALDQTLLALNRPSDQFVYMIKELGLDHINRGTDRSFVEYLKESLGDSVDEFTVQSFGEVIVNFLNEGLRQA</sequence>
<feature type="chain" id="PRO_0000052523" description="Extracellular globin-E1">
    <location>
        <begin position="1" status="less than"/>
        <end position="194" status="greater than"/>
    </location>
</feature>
<feature type="domain" description="Globin 1" evidence="1">
    <location>
        <begin position="1"/>
        <end position="45"/>
    </location>
</feature>
<feature type="domain" description="Globin 2" evidence="1">
    <location>
        <begin position="55"/>
        <end position="194"/>
    </location>
</feature>
<feature type="binding site" description="proximal binding residue" evidence="1">
    <location>
        <position position="150"/>
    </location>
    <ligand>
        <name>heme b</name>
        <dbReference type="ChEBI" id="CHEBI:60344"/>
    </ligand>
    <ligandPart>
        <name>Fe</name>
        <dbReference type="ChEBI" id="CHEBI:18248"/>
    </ligandPart>
</feature>
<feature type="non-terminal residue">
    <location>
        <position position="1"/>
    </location>
</feature>
<feature type="non-terminal residue">
    <location>
        <position position="194"/>
    </location>
</feature>
<keyword id="KW-0903">Direct protein sequencing</keyword>
<keyword id="KW-0349">Heme</keyword>
<keyword id="KW-0408">Iron</keyword>
<keyword id="KW-0479">Metal-binding</keyword>
<keyword id="KW-0561">Oxygen transport</keyword>
<keyword id="KW-0813">Transport</keyword>
<dbReference type="PIR" id="A28141">
    <property type="entry name" value="A28141"/>
</dbReference>
<dbReference type="SMR" id="P19363"/>
<dbReference type="GO" id="GO:0020037">
    <property type="term" value="F:heme binding"/>
    <property type="evidence" value="ECO:0007669"/>
    <property type="project" value="InterPro"/>
</dbReference>
<dbReference type="GO" id="GO:0046872">
    <property type="term" value="F:metal ion binding"/>
    <property type="evidence" value="ECO:0007669"/>
    <property type="project" value="UniProtKB-KW"/>
</dbReference>
<dbReference type="GO" id="GO:0019825">
    <property type="term" value="F:oxygen binding"/>
    <property type="evidence" value="ECO:0007669"/>
    <property type="project" value="InterPro"/>
</dbReference>
<dbReference type="GO" id="GO:0005344">
    <property type="term" value="F:oxygen carrier activity"/>
    <property type="evidence" value="ECO:0007669"/>
    <property type="project" value="UniProtKB-KW"/>
</dbReference>
<dbReference type="CDD" id="cd01040">
    <property type="entry name" value="Mb-like"/>
    <property type="match status" value="1"/>
</dbReference>
<dbReference type="Gene3D" id="1.10.490.10">
    <property type="entry name" value="Globins"/>
    <property type="match status" value="1"/>
</dbReference>
<dbReference type="InterPro" id="IPR000971">
    <property type="entry name" value="Globin"/>
</dbReference>
<dbReference type="InterPro" id="IPR009050">
    <property type="entry name" value="Globin-like_sf"/>
</dbReference>
<dbReference type="InterPro" id="IPR012292">
    <property type="entry name" value="Globin/Proto"/>
</dbReference>
<dbReference type="InterPro" id="IPR044399">
    <property type="entry name" value="Mb-like_M"/>
</dbReference>
<dbReference type="PANTHER" id="PTHR47217">
    <property type="entry name" value="GLOBIN-LIKE PROTEIN"/>
    <property type="match status" value="1"/>
</dbReference>
<dbReference type="PANTHER" id="PTHR47217:SF1">
    <property type="entry name" value="GLOBIN-LIKE PROTEIN"/>
    <property type="match status" value="1"/>
</dbReference>
<dbReference type="Pfam" id="PF00042">
    <property type="entry name" value="Globin"/>
    <property type="match status" value="1"/>
</dbReference>
<dbReference type="SUPFAM" id="SSF46458">
    <property type="entry name" value="Globin-like"/>
    <property type="match status" value="1"/>
</dbReference>
<dbReference type="PROSITE" id="PS01033">
    <property type="entry name" value="GLOBIN"/>
    <property type="match status" value="2"/>
</dbReference>
<evidence type="ECO:0000255" key="1">
    <source>
        <dbReference type="PROSITE-ProRule" id="PRU00238"/>
    </source>
</evidence>
<accession>P19363</accession>
<name>GLB1_ARTSX</name>
<protein>
    <recommendedName>
        <fullName>Extracellular globin-E1</fullName>
    </recommendedName>
</protein>
<comment type="subunit">
    <text>Artemia hemoglobin is a dimer of two similar sized subunits. Each subunit represents a globin chain which exists in two forms (alpha and beta), thus making possible three different phenotypes (HB1, alpha(2), HB2, alpha/beta, HB3, beta(2)). The globin chain is a polymer of eight heme-binding covalently linked domains.</text>
</comment>
<comment type="similarity">
    <text evidence="1">Belongs to the globin family.</text>
</comment>